<keyword id="KW-1003">Cell membrane</keyword>
<keyword id="KW-0472">Membrane</keyword>
<keyword id="KW-1185">Reference proteome</keyword>
<keyword id="KW-0812">Transmembrane</keyword>
<keyword id="KW-1133">Transmembrane helix</keyword>
<feature type="chain" id="PRO_0000391592" description="CASP-like protein 1C1">
    <location>
        <begin position="1"/>
        <end position="162"/>
    </location>
</feature>
<feature type="topological domain" description="Cytoplasmic" evidence="2">
    <location>
        <begin position="1"/>
        <end position="7"/>
    </location>
</feature>
<feature type="transmembrane region" description="Helical" evidence="2">
    <location>
        <begin position="8"/>
        <end position="28"/>
    </location>
</feature>
<feature type="topological domain" description="Extracellular" evidence="2">
    <location>
        <begin position="29"/>
        <end position="50"/>
    </location>
</feature>
<feature type="transmembrane region" description="Helical" evidence="2">
    <location>
        <begin position="51"/>
        <end position="71"/>
    </location>
</feature>
<feature type="topological domain" description="Cytoplasmic" evidence="2">
    <location>
        <begin position="72"/>
        <end position="79"/>
    </location>
</feature>
<feature type="transmembrane region" description="Helical" evidence="2">
    <location>
        <begin position="80"/>
        <end position="100"/>
    </location>
</feature>
<feature type="topological domain" description="Extracellular" evidence="2">
    <location>
        <begin position="101"/>
        <end position="128"/>
    </location>
</feature>
<feature type="transmembrane region" description="Helical" evidence="2">
    <location>
        <begin position="129"/>
        <end position="149"/>
    </location>
</feature>
<feature type="topological domain" description="Cytoplasmic" evidence="2">
    <location>
        <begin position="150"/>
        <end position="162"/>
    </location>
</feature>
<proteinExistence type="evidence at transcript level"/>
<reference key="1">
    <citation type="journal article" date="2009" name="Nature">
        <title>The Sorghum bicolor genome and the diversification of grasses.</title>
        <authorList>
            <person name="Paterson A.H."/>
            <person name="Bowers J.E."/>
            <person name="Bruggmann R."/>
            <person name="Dubchak I."/>
            <person name="Grimwood J."/>
            <person name="Gundlach H."/>
            <person name="Haberer G."/>
            <person name="Hellsten U."/>
            <person name="Mitros T."/>
            <person name="Poliakov A."/>
            <person name="Schmutz J."/>
            <person name="Spannagl M."/>
            <person name="Tang H."/>
            <person name="Wang X."/>
            <person name="Wicker T."/>
            <person name="Bharti A.K."/>
            <person name="Chapman J."/>
            <person name="Feltus F.A."/>
            <person name="Gowik U."/>
            <person name="Grigoriev I.V."/>
            <person name="Lyons E."/>
            <person name="Maher C.A."/>
            <person name="Martis M."/>
            <person name="Narechania A."/>
            <person name="Otillar R.P."/>
            <person name="Penning B.W."/>
            <person name="Salamov A.A."/>
            <person name="Wang Y."/>
            <person name="Zhang L."/>
            <person name="Carpita N.C."/>
            <person name="Freeling M."/>
            <person name="Gingle A.R."/>
            <person name="Hash C.T."/>
            <person name="Keller B."/>
            <person name="Klein P."/>
            <person name="Kresovich S."/>
            <person name="McCann M.C."/>
            <person name="Ming R."/>
            <person name="Peterson D.G."/>
            <person name="Mehboob-ur-Rahman M."/>
            <person name="Ware D."/>
            <person name="Westhoff P."/>
            <person name="Mayer K.F.X."/>
            <person name="Messing J."/>
            <person name="Rokhsar D.S."/>
        </authorList>
    </citation>
    <scope>NUCLEOTIDE SEQUENCE [LARGE SCALE GENOMIC DNA]</scope>
    <source>
        <strain>cv. BTx623</strain>
    </source>
</reference>
<reference key="2">
    <citation type="journal article" date="2018" name="Plant J.">
        <title>The Sorghum bicolor reference genome: improved assembly, gene annotations, a transcriptome atlas, and signatures of genome organization.</title>
        <authorList>
            <person name="McCormick R.F."/>
            <person name="Truong S.K."/>
            <person name="Sreedasyam A."/>
            <person name="Jenkins J."/>
            <person name="Shu S."/>
            <person name="Sims D."/>
            <person name="Kennedy M."/>
            <person name="Amirebrahimi M."/>
            <person name="Weers B.D."/>
            <person name="McKinley B."/>
            <person name="Mattison A."/>
            <person name="Morishige D.T."/>
            <person name="Grimwood J."/>
            <person name="Schmutz J."/>
            <person name="Mullet J.E."/>
        </authorList>
    </citation>
    <scope>GENOME REANNOTATION</scope>
    <source>
        <strain>cv. BTx623</strain>
    </source>
</reference>
<reference key="3">
    <citation type="journal article" date="2014" name="Plant Physiol.">
        <title>Functional and evolutionary analysis of the CASPARIAN STRIP MEMBRANE DOMAIN PROTEIN family.</title>
        <authorList>
            <person name="Roppolo D."/>
            <person name="Boeckmann B."/>
            <person name="Pfister A."/>
            <person name="Boutet E."/>
            <person name="Rubio M.C."/>
            <person name="Denervaud-Tendon V."/>
            <person name="Vermeer J.E."/>
            <person name="Gheyselinck J."/>
            <person name="Xenarios I."/>
            <person name="Geldner N."/>
        </authorList>
    </citation>
    <scope>GENE FAMILY</scope>
    <scope>NOMENCLATURE</scope>
</reference>
<accession>C5YVA2</accession>
<protein>
    <recommendedName>
        <fullName>CASP-like protein 1C1</fullName>
        <shortName>SbCASPL1C1</shortName>
    </recommendedName>
</protein>
<gene>
    <name type="ordered locus">Sb09g008190</name>
</gene>
<dbReference type="EMBL" id="CM000768">
    <property type="protein sequence ID" value="EES19280.1"/>
    <property type="molecule type" value="Genomic_DNA"/>
</dbReference>
<dbReference type="RefSeq" id="XP_002440850.1">
    <property type="nucleotide sequence ID" value="XM_002440805.1"/>
</dbReference>
<dbReference type="SMR" id="C5YVA2"/>
<dbReference type="FunCoup" id="C5YVA2">
    <property type="interactions" value="1584"/>
</dbReference>
<dbReference type="STRING" id="4558.C5YVA2"/>
<dbReference type="EnsemblPlants" id="EES19280">
    <property type="protein sequence ID" value="EES19280"/>
    <property type="gene ID" value="SORBI_3009G088900"/>
</dbReference>
<dbReference type="Gramene" id="EES19280">
    <property type="protein sequence ID" value="EES19280"/>
    <property type="gene ID" value="SORBI_3009G088900"/>
</dbReference>
<dbReference type="KEGG" id="sbi:8066658"/>
<dbReference type="eggNOG" id="ENOG502RZXX">
    <property type="taxonomic scope" value="Eukaryota"/>
</dbReference>
<dbReference type="HOGENOM" id="CLU_066104_3_0_1"/>
<dbReference type="InParanoid" id="C5YVA2"/>
<dbReference type="OMA" id="ENINDHR"/>
<dbReference type="OrthoDB" id="1906221at2759"/>
<dbReference type="Proteomes" id="UP000000768">
    <property type="component" value="Chromosome 9"/>
</dbReference>
<dbReference type="GO" id="GO:0005886">
    <property type="term" value="C:plasma membrane"/>
    <property type="evidence" value="ECO:0000318"/>
    <property type="project" value="GO_Central"/>
</dbReference>
<dbReference type="GO" id="GO:0035264">
    <property type="term" value="P:multicellular organism growth"/>
    <property type="evidence" value="ECO:0007669"/>
    <property type="project" value="EnsemblPlants"/>
</dbReference>
<dbReference type="GO" id="GO:0009733">
    <property type="term" value="P:response to auxin"/>
    <property type="evidence" value="ECO:0007669"/>
    <property type="project" value="EnsemblPlants"/>
</dbReference>
<dbReference type="GO" id="GO:0009741">
    <property type="term" value="P:response to brassinosteroid"/>
    <property type="evidence" value="ECO:0007669"/>
    <property type="project" value="EnsemblPlants"/>
</dbReference>
<dbReference type="GO" id="GO:0009826">
    <property type="term" value="P:unidimensional cell growth"/>
    <property type="evidence" value="ECO:0007669"/>
    <property type="project" value="EnsemblPlants"/>
</dbReference>
<dbReference type="InterPro" id="IPR006459">
    <property type="entry name" value="CASP/CASPL"/>
</dbReference>
<dbReference type="InterPro" id="IPR006702">
    <property type="entry name" value="CASP_dom"/>
</dbReference>
<dbReference type="InterPro" id="IPR044173">
    <property type="entry name" value="CASPL"/>
</dbReference>
<dbReference type="NCBIfam" id="TIGR01569">
    <property type="entry name" value="A_tha_TIGR01569"/>
    <property type="match status" value="1"/>
</dbReference>
<dbReference type="PANTHER" id="PTHR36488">
    <property type="entry name" value="CASP-LIKE PROTEIN 1U1"/>
    <property type="match status" value="1"/>
</dbReference>
<dbReference type="PANTHER" id="PTHR36488:SF8">
    <property type="entry name" value="CASP-LIKE PROTEIN 1U1"/>
    <property type="match status" value="1"/>
</dbReference>
<dbReference type="Pfam" id="PF04535">
    <property type="entry name" value="CASP_dom"/>
    <property type="match status" value="1"/>
</dbReference>
<organism>
    <name type="scientific">Sorghum bicolor</name>
    <name type="common">Sorghum</name>
    <name type="synonym">Sorghum vulgare</name>
    <dbReference type="NCBI Taxonomy" id="4558"/>
    <lineage>
        <taxon>Eukaryota</taxon>
        <taxon>Viridiplantae</taxon>
        <taxon>Streptophyta</taxon>
        <taxon>Embryophyta</taxon>
        <taxon>Tracheophyta</taxon>
        <taxon>Spermatophyta</taxon>
        <taxon>Magnoliopsida</taxon>
        <taxon>Liliopsida</taxon>
        <taxon>Poales</taxon>
        <taxon>Poaceae</taxon>
        <taxon>PACMAD clade</taxon>
        <taxon>Panicoideae</taxon>
        <taxon>Andropogonodae</taxon>
        <taxon>Andropogoneae</taxon>
        <taxon>Sorghinae</taxon>
        <taxon>Sorghum</taxon>
    </lineage>
</organism>
<sequence length="162" mass="16988">MAKLHRLISAVLRLAAAGAAAAAAIIMVTSHETTSFFGIEMEAKYSYTPSFVFFVVAFAVAFAYSLLALLARPGSTASRLLLLSDVMVGMLLTGAVAATGAISQVGKSGNEHAGWLPICAQVQAYCSHVMGALIAGFVSLLLYFLIIMYSLHAVAEPLCSCH</sequence>
<comment type="subunit">
    <text evidence="1">Homodimer and heterodimers.</text>
</comment>
<comment type="subcellular location">
    <subcellularLocation>
        <location evidence="1">Cell membrane</location>
        <topology evidence="1">Multi-pass membrane protein</topology>
    </subcellularLocation>
</comment>
<comment type="similarity">
    <text evidence="3">Belongs to the Casparian strip membrane proteins (CASP) family.</text>
</comment>
<name>CSPLL_SORBI</name>
<evidence type="ECO:0000250" key="1"/>
<evidence type="ECO:0000255" key="2"/>
<evidence type="ECO:0000305" key="3"/>